<protein>
    <recommendedName>
        <fullName evidence="1">Chaperonin GroEL</fullName>
        <ecNumber evidence="1">5.6.1.7</ecNumber>
    </recommendedName>
    <alternativeName>
        <fullName evidence="1">60 kDa chaperonin</fullName>
    </alternativeName>
    <alternativeName>
        <fullName evidence="1">Chaperonin-60</fullName>
        <shortName evidence="1">Cpn60</shortName>
    </alternativeName>
</protein>
<organism>
    <name type="scientific">Escherichia coli (strain K12 / DH10B)</name>
    <dbReference type="NCBI Taxonomy" id="316385"/>
    <lineage>
        <taxon>Bacteria</taxon>
        <taxon>Pseudomonadati</taxon>
        <taxon>Pseudomonadota</taxon>
        <taxon>Gammaproteobacteria</taxon>
        <taxon>Enterobacterales</taxon>
        <taxon>Enterobacteriaceae</taxon>
        <taxon>Escherichia</taxon>
    </lineage>
</organism>
<name>CH60_ECODH</name>
<evidence type="ECO:0000255" key="1">
    <source>
        <dbReference type="HAMAP-Rule" id="MF_00600"/>
    </source>
</evidence>
<feature type="chain" id="PRO_1000130010" description="Chaperonin GroEL">
    <location>
        <begin position="1"/>
        <end position="548"/>
    </location>
</feature>
<feature type="binding site" evidence="1">
    <location>
        <begin position="30"/>
        <end position="33"/>
    </location>
    <ligand>
        <name>ATP</name>
        <dbReference type="ChEBI" id="CHEBI:30616"/>
    </ligand>
</feature>
<feature type="binding site" evidence="1">
    <location>
        <position position="51"/>
    </location>
    <ligand>
        <name>ATP</name>
        <dbReference type="ChEBI" id="CHEBI:30616"/>
    </ligand>
</feature>
<feature type="binding site" evidence="1">
    <location>
        <begin position="87"/>
        <end position="91"/>
    </location>
    <ligand>
        <name>ATP</name>
        <dbReference type="ChEBI" id="CHEBI:30616"/>
    </ligand>
</feature>
<feature type="binding site" evidence="1">
    <location>
        <position position="415"/>
    </location>
    <ligand>
        <name>ATP</name>
        <dbReference type="ChEBI" id="CHEBI:30616"/>
    </ligand>
</feature>
<feature type="binding site" evidence="1">
    <location>
        <begin position="479"/>
        <end position="481"/>
    </location>
    <ligand>
        <name>ATP</name>
        <dbReference type="ChEBI" id="CHEBI:30616"/>
    </ligand>
</feature>
<feature type="binding site" evidence="1">
    <location>
        <position position="495"/>
    </location>
    <ligand>
        <name>ATP</name>
        <dbReference type="ChEBI" id="CHEBI:30616"/>
    </ligand>
</feature>
<dbReference type="EC" id="5.6.1.7" evidence="1"/>
<dbReference type="EMBL" id="CP000948">
    <property type="protein sequence ID" value="ACB05134.1"/>
    <property type="molecule type" value="Genomic_DNA"/>
</dbReference>
<dbReference type="RefSeq" id="WP_000729117.1">
    <property type="nucleotide sequence ID" value="NC_010473.1"/>
</dbReference>
<dbReference type="SMR" id="B1XDP7"/>
<dbReference type="GeneID" id="93777681"/>
<dbReference type="KEGG" id="ecd:ECDH10B_4336"/>
<dbReference type="HOGENOM" id="CLU_016503_3_0_6"/>
<dbReference type="GO" id="GO:0005737">
    <property type="term" value="C:cytoplasm"/>
    <property type="evidence" value="ECO:0007669"/>
    <property type="project" value="UniProtKB-SubCell"/>
</dbReference>
<dbReference type="GO" id="GO:0005524">
    <property type="term" value="F:ATP binding"/>
    <property type="evidence" value="ECO:0007669"/>
    <property type="project" value="UniProtKB-UniRule"/>
</dbReference>
<dbReference type="GO" id="GO:0140662">
    <property type="term" value="F:ATP-dependent protein folding chaperone"/>
    <property type="evidence" value="ECO:0007669"/>
    <property type="project" value="InterPro"/>
</dbReference>
<dbReference type="GO" id="GO:0016853">
    <property type="term" value="F:isomerase activity"/>
    <property type="evidence" value="ECO:0007669"/>
    <property type="project" value="UniProtKB-KW"/>
</dbReference>
<dbReference type="GO" id="GO:0051082">
    <property type="term" value="F:unfolded protein binding"/>
    <property type="evidence" value="ECO:0007669"/>
    <property type="project" value="UniProtKB-UniRule"/>
</dbReference>
<dbReference type="GO" id="GO:0042026">
    <property type="term" value="P:protein refolding"/>
    <property type="evidence" value="ECO:0007669"/>
    <property type="project" value="UniProtKB-UniRule"/>
</dbReference>
<dbReference type="CDD" id="cd03344">
    <property type="entry name" value="GroEL"/>
    <property type="match status" value="1"/>
</dbReference>
<dbReference type="FunFam" id="1.10.560.10:FF:000001">
    <property type="entry name" value="60 kDa chaperonin"/>
    <property type="match status" value="1"/>
</dbReference>
<dbReference type="FunFam" id="3.50.7.10:FF:000001">
    <property type="entry name" value="60 kDa chaperonin"/>
    <property type="match status" value="1"/>
</dbReference>
<dbReference type="Gene3D" id="3.50.7.10">
    <property type="entry name" value="GroEL"/>
    <property type="match status" value="1"/>
</dbReference>
<dbReference type="Gene3D" id="1.10.560.10">
    <property type="entry name" value="GroEL-like equatorial domain"/>
    <property type="match status" value="1"/>
</dbReference>
<dbReference type="Gene3D" id="3.30.260.10">
    <property type="entry name" value="TCP-1-like chaperonin intermediate domain"/>
    <property type="match status" value="1"/>
</dbReference>
<dbReference type="HAMAP" id="MF_00600">
    <property type="entry name" value="CH60"/>
    <property type="match status" value="1"/>
</dbReference>
<dbReference type="InterPro" id="IPR018370">
    <property type="entry name" value="Chaperonin_Cpn60_CS"/>
</dbReference>
<dbReference type="InterPro" id="IPR001844">
    <property type="entry name" value="Cpn60/GroEL"/>
</dbReference>
<dbReference type="InterPro" id="IPR002423">
    <property type="entry name" value="Cpn60/GroEL/TCP-1"/>
</dbReference>
<dbReference type="InterPro" id="IPR027409">
    <property type="entry name" value="GroEL-like_apical_dom_sf"/>
</dbReference>
<dbReference type="InterPro" id="IPR027413">
    <property type="entry name" value="GROEL-like_equatorial_sf"/>
</dbReference>
<dbReference type="InterPro" id="IPR027410">
    <property type="entry name" value="TCP-1-like_intermed_sf"/>
</dbReference>
<dbReference type="NCBIfam" id="TIGR02348">
    <property type="entry name" value="GroEL"/>
    <property type="match status" value="1"/>
</dbReference>
<dbReference type="NCBIfam" id="NF000592">
    <property type="entry name" value="PRK00013.1"/>
    <property type="match status" value="1"/>
</dbReference>
<dbReference type="NCBIfam" id="NF009487">
    <property type="entry name" value="PRK12849.1"/>
    <property type="match status" value="1"/>
</dbReference>
<dbReference type="NCBIfam" id="NF009488">
    <property type="entry name" value="PRK12850.1"/>
    <property type="match status" value="1"/>
</dbReference>
<dbReference type="NCBIfam" id="NF009489">
    <property type="entry name" value="PRK12851.1"/>
    <property type="match status" value="1"/>
</dbReference>
<dbReference type="PANTHER" id="PTHR45633">
    <property type="entry name" value="60 KDA HEAT SHOCK PROTEIN, MITOCHONDRIAL"/>
    <property type="match status" value="1"/>
</dbReference>
<dbReference type="Pfam" id="PF00118">
    <property type="entry name" value="Cpn60_TCP1"/>
    <property type="match status" value="1"/>
</dbReference>
<dbReference type="PRINTS" id="PR00298">
    <property type="entry name" value="CHAPERONIN60"/>
</dbReference>
<dbReference type="SUPFAM" id="SSF52029">
    <property type="entry name" value="GroEL apical domain-like"/>
    <property type="match status" value="1"/>
</dbReference>
<dbReference type="SUPFAM" id="SSF48592">
    <property type="entry name" value="GroEL equatorial domain-like"/>
    <property type="match status" value="1"/>
</dbReference>
<dbReference type="SUPFAM" id="SSF54849">
    <property type="entry name" value="GroEL-intermediate domain like"/>
    <property type="match status" value="1"/>
</dbReference>
<dbReference type="PROSITE" id="PS00296">
    <property type="entry name" value="CHAPERONINS_CPN60"/>
    <property type="match status" value="1"/>
</dbReference>
<sequence length="548" mass="57329">MAAKDVKFGNDARVKMLRGVNVLADAVKVTLGPKGRNVVLDKSFGAPTITKDGVSVAREIELEDKFENMGAQMVKEVASKANDAAGDGTTTATVLAQAIITEGLKAVAAGMNPMDLKRGIDKAVTAAVEELKALSVPCSDSKAIAQVGTISANSDETVGKLIAEAMDKVGKEGVITVEDGTGLQDELDVVEGMQFDRGYLSPYFINKPETGAVELESPFILLADKKISNIREMLPVLEAVAKAGKPLLIIAEDVEGEALATLVVNTMRGIVKVAAVKAPGFGDRRKAMLQDIATLTGGTVISEEIGMELEKATLEDLGQAKRVVINKDTTTIIDGVGEEAAIQGRVAQIRQQIEEATSDYDREKLQERVAKLAGGVAVIKVGAATEVEMKEKKARVEDALHATRAAVEEGVVAGGGVALIRVASKLADLRGQNEDQNVGIKVALRAMEAPLRQIVLNCGEEPSVVANTVKGGDGNYGYNAATEEYGNMIDMGILDPTKVTRSALQYAASVAGLMITTECMVTDLPKNDAADLGAAGGMGGMGGMGGMM</sequence>
<accession>B1XDP7</accession>
<proteinExistence type="inferred from homology"/>
<comment type="function">
    <text evidence="1">Together with its co-chaperonin GroES, plays an essential role in assisting protein folding. The GroEL-GroES system forms a nano-cage that allows encapsulation of the non-native substrate proteins and provides a physical environment optimized to promote and accelerate protein folding.</text>
</comment>
<comment type="catalytic activity">
    <reaction evidence="1">
        <text>ATP + H2O + a folded polypeptide = ADP + phosphate + an unfolded polypeptide.</text>
        <dbReference type="EC" id="5.6.1.7"/>
    </reaction>
</comment>
<comment type="subunit">
    <text evidence="1">Forms a cylinder of 14 subunits composed of two heptameric rings stacked back-to-back. Interacts with the co-chaperonin GroES.</text>
</comment>
<comment type="subcellular location">
    <subcellularLocation>
        <location evidence="1">Cytoplasm</location>
    </subcellularLocation>
</comment>
<comment type="similarity">
    <text evidence="1">Belongs to the chaperonin (HSP60) family.</text>
</comment>
<gene>
    <name evidence="1" type="primary">groEL</name>
    <name evidence="1" type="synonym">groL</name>
    <name type="ordered locus">ECDH10B_4336</name>
</gene>
<keyword id="KW-0067">ATP-binding</keyword>
<keyword id="KW-0143">Chaperone</keyword>
<keyword id="KW-0963">Cytoplasm</keyword>
<keyword id="KW-0413">Isomerase</keyword>
<keyword id="KW-0547">Nucleotide-binding</keyword>
<reference key="1">
    <citation type="journal article" date="2008" name="J. Bacteriol.">
        <title>The complete genome sequence of Escherichia coli DH10B: insights into the biology of a laboratory workhorse.</title>
        <authorList>
            <person name="Durfee T."/>
            <person name="Nelson R."/>
            <person name="Baldwin S."/>
            <person name="Plunkett G. III"/>
            <person name="Burland V."/>
            <person name="Mau B."/>
            <person name="Petrosino J.F."/>
            <person name="Qin X."/>
            <person name="Muzny D.M."/>
            <person name="Ayele M."/>
            <person name="Gibbs R.A."/>
            <person name="Csorgo B."/>
            <person name="Posfai G."/>
            <person name="Weinstock G.M."/>
            <person name="Blattner F.R."/>
        </authorList>
    </citation>
    <scope>NUCLEOTIDE SEQUENCE [LARGE SCALE GENOMIC DNA]</scope>
    <source>
        <strain>K12 / DH10B</strain>
    </source>
</reference>